<name>YAAA_SHIB3</name>
<comment type="similarity">
    <text evidence="1">Belongs to the UPF0246 family.</text>
</comment>
<evidence type="ECO:0000255" key="1">
    <source>
        <dbReference type="HAMAP-Rule" id="MF_00652"/>
    </source>
</evidence>
<gene>
    <name evidence="1" type="primary">yaaA</name>
    <name type="ordered locus">SbBS512_E0006</name>
</gene>
<keyword id="KW-1185">Reference proteome</keyword>
<reference key="1">
    <citation type="submission" date="2008-05" db="EMBL/GenBank/DDBJ databases">
        <title>Complete sequence of Shigella boydii serotype 18 strain BS512.</title>
        <authorList>
            <person name="Rasko D.A."/>
            <person name="Rosovitz M."/>
            <person name="Maurelli A.T."/>
            <person name="Myers G."/>
            <person name="Seshadri R."/>
            <person name="Cer R."/>
            <person name="Jiang L."/>
            <person name="Ravel J."/>
            <person name="Sebastian Y."/>
        </authorList>
    </citation>
    <scope>NUCLEOTIDE SEQUENCE [LARGE SCALE GENOMIC DNA]</scope>
    <source>
        <strain>CDC 3083-94 / BS512</strain>
    </source>
</reference>
<accession>B2U221</accession>
<sequence length="258" mass="29542">MLILISPAKTLDYQSPLTTTRYTLPELLDNSQQLIHEARKLTPPQISTLMRISDKLAGINAARFHDWQPDFTPANARQAILAFKGDVYTGLQAETFSEDDFDFAQQHLRMLSGLYGVLRPLDLMQPYRLEMGIRLENARGKDLYQFWGDIITNKLNEALAAQGDNVVINLASDEYFKSVKPKKLNAEIIKPVFLDEKNGKFKIISFYAKKARGLMSRFIIENRLTKPEQLTGFNSEGYFFDEASSSNGELVFKRYEQR</sequence>
<feature type="chain" id="PRO_1000131146" description="UPF0246 protein YaaA">
    <location>
        <begin position="1"/>
        <end position="258"/>
    </location>
</feature>
<proteinExistence type="inferred from homology"/>
<dbReference type="EMBL" id="CP001063">
    <property type="protein sequence ID" value="ACD07590.1"/>
    <property type="molecule type" value="Genomic_DNA"/>
</dbReference>
<dbReference type="RefSeq" id="WP_000906196.1">
    <property type="nucleotide sequence ID" value="NC_010658.1"/>
</dbReference>
<dbReference type="SMR" id="B2U221"/>
<dbReference type="STRING" id="344609.SbBS512_E0006"/>
<dbReference type="KEGG" id="sbc:SbBS512_E0006"/>
<dbReference type="HOGENOM" id="CLU_061989_0_0_6"/>
<dbReference type="Proteomes" id="UP000001030">
    <property type="component" value="Chromosome"/>
</dbReference>
<dbReference type="GO" id="GO:0005829">
    <property type="term" value="C:cytosol"/>
    <property type="evidence" value="ECO:0007669"/>
    <property type="project" value="TreeGrafter"/>
</dbReference>
<dbReference type="GO" id="GO:0033194">
    <property type="term" value="P:response to hydroperoxide"/>
    <property type="evidence" value="ECO:0007669"/>
    <property type="project" value="TreeGrafter"/>
</dbReference>
<dbReference type="HAMAP" id="MF_00652">
    <property type="entry name" value="UPF0246"/>
    <property type="match status" value="1"/>
</dbReference>
<dbReference type="InterPro" id="IPR005583">
    <property type="entry name" value="YaaA"/>
</dbReference>
<dbReference type="NCBIfam" id="NF002541">
    <property type="entry name" value="PRK02101.1-1"/>
    <property type="match status" value="1"/>
</dbReference>
<dbReference type="NCBIfam" id="NF002542">
    <property type="entry name" value="PRK02101.1-3"/>
    <property type="match status" value="1"/>
</dbReference>
<dbReference type="PANTHER" id="PTHR30283:SF4">
    <property type="entry name" value="PEROXIDE STRESS RESISTANCE PROTEIN YAAA"/>
    <property type="match status" value="1"/>
</dbReference>
<dbReference type="PANTHER" id="PTHR30283">
    <property type="entry name" value="PEROXIDE STRESS RESPONSE PROTEIN YAAA"/>
    <property type="match status" value="1"/>
</dbReference>
<dbReference type="Pfam" id="PF03883">
    <property type="entry name" value="H2O2_YaaD"/>
    <property type="match status" value="1"/>
</dbReference>
<organism>
    <name type="scientific">Shigella boydii serotype 18 (strain CDC 3083-94 / BS512)</name>
    <dbReference type="NCBI Taxonomy" id="344609"/>
    <lineage>
        <taxon>Bacteria</taxon>
        <taxon>Pseudomonadati</taxon>
        <taxon>Pseudomonadota</taxon>
        <taxon>Gammaproteobacteria</taxon>
        <taxon>Enterobacterales</taxon>
        <taxon>Enterobacteriaceae</taxon>
        <taxon>Shigella</taxon>
    </lineage>
</organism>
<protein>
    <recommendedName>
        <fullName evidence="1">UPF0246 protein YaaA</fullName>
    </recommendedName>
</protein>